<feature type="chain" id="PRO_1000063282" description="ATP phosphoribosyltransferase">
    <location>
        <begin position="1"/>
        <end position="208"/>
    </location>
</feature>
<dbReference type="EC" id="2.4.2.17" evidence="1"/>
<dbReference type="EMBL" id="AM406671">
    <property type="protein sequence ID" value="CAL97889.1"/>
    <property type="molecule type" value="Genomic_DNA"/>
</dbReference>
<dbReference type="RefSeq" id="WP_011835173.1">
    <property type="nucleotide sequence ID" value="NC_009004.1"/>
</dbReference>
<dbReference type="SMR" id="A2RKS3"/>
<dbReference type="STRING" id="416870.llmg_1296"/>
<dbReference type="KEGG" id="llm:llmg_1296"/>
<dbReference type="eggNOG" id="COG0040">
    <property type="taxonomic scope" value="Bacteria"/>
</dbReference>
<dbReference type="HOGENOM" id="CLU_038115_2_0_9"/>
<dbReference type="OrthoDB" id="9801867at2"/>
<dbReference type="PhylomeDB" id="A2RKS3"/>
<dbReference type="UniPathway" id="UPA00031">
    <property type="reaction ID" value="UER00006"/>
</dbReference>
<dbReference type="Proteomes" id="UP000000364">
    <property type="component" value="Chromosome"/>
</dbReference>
<dbReference type="GO" id="GO:0005737">
    <property type="term" value="C:cytoplasm"/>
    <property type="evidence" value="ECO:0007669"/>
    <property type="project" value="UniProtKB-SubCell"/>
</dbReference>
<dbReference type="GO" id="GO:0005524">
    <property type="term" value="F:ATP binding"/>
    <property type="evidence" value="ECO:0007669"/>
    <property type="project" value="UniProtKB-KW"/>
</dbReference>
<dbReference type="GO" id="GO:0003879">
    <property type="term" value="F:ATP phosphoribosyltransferase activity"/>
    <property type="evidence" value="ECO:0007669"/>
    <property type="project" value="UniProtKB-UniRule"/>
</dbReference>
<dbReference type="GO" id="GO:0000105">
    <property type="term" value="P:L-histidine biosynthetic process"/>
    <property type="evidence" value="ECO:0007669"/>
    <property type="project" value="UniProtKB-UniRule"/>
</dbReference>
<dbReference type="CDD" id="cd13595">
    <property type="entry name" value="PBP2_HisGs"/>
    <property type="match status" value="1"/>
</dbReference>
<dbReference type="FunFam" id="3.40.190.10:FF:000008">
    <property type="entry name" value="ATP phosphoribosyltransferase"/>
    <property type="match status" value="1"/>
</dbReference>
<dbReference type="Gene3D" id="3.40.190.10">
    <property type="entry name" value="Periplasmic binding protein-like II"/>
    <property type="match status" value="2"/>
</dbReference>
<dbReference type="HAMAP" id="MF_01018">
    <property type="entry name" value="HisG_Short"/>
    <property type="match status" value="1"/>
</dbReference>
<dbReference type="InterPro" id="IPR013820">
    <property type="entry name" value="ATP_PRibTrfase_cat"/>
</dbReference>
<dbReference type="InterPro" id="IPR018198">
    <property type="entry name" value="ATP_PRibTrfase_CS"/>
</dbReference>
<dbReference type="InterPro" id="IPR001348">
    <property type="entry name" value="ATP_PRibTrfase_HisG"/>
</dbReference>
<dbReference type="InterPro" id="IPR024893">
    <property type="entry name" value="ATP_PRibTrfase_HisG_short"/>
</dbReference>
<dbReference type="NCBIfam" id="TIGR00070">
    <property type="entry name" value="hisG"/>
    <property type="match status" value="1"/>
</dbReference>
<dbReference type="PANTHER" id="PTHR21403:SF8">
    <property type="entry name" value="ATP PHOSPHORIBOSYLTRANSFERASE"/>
    <property type="match status" value="1"/>
</dbReference>
<dbReference type="PANTHER" id="PTHR21403">
    <property type="entry name" value="ATP PHOSPHORIBOSYLTRANSFERASE ATP-PRTASE"/>
    <property type="match status" value="1"/>
</dbReference>
<dbReference type="Pfam" id="PF01634">
    <property type="entry name" value="HisG"/>
    <property type="match status" value="1"/>
</dbReference>
<dbReference type="SUPFAM" id="SSF53850">
    <property type="entry name" value="Periplasmic binding protein-like II"/>
    <property type="match status" value="1"/>
</dbReference>
<dbReference type="PROSITE" id="PS01316">
    <property type="entry name" value="ATP_P_PHORIBOSYLTR"/>
    <property type="match status" value="1"/>
</dbReference>
<accession>A2RKS3</accession>
<proteinExistence type="inferred from homology"/>
<name>HIS1_LACLM</name>
<sequence>MIRVAMTKGRIQKQVTILLEQAGFDMTAVREMGRELVVTIPDDLEIIFGKANDVITFLEHGIVDIGFVGKDTLDENDFDDYYELLDLKVGQCIFALASYPDFLNKKFHRRKRIASKYPRITKNYFAQKQEDIEIIKLEGSVELGPVVGLADAIVDIVETGNTLSANGLVVIEKISQISTRMIVNKVSFKFKKDKIIEIVERLENAQTN</sequence>
<comment type="function">
    <text evidence="1">Catalyzes the condensation of ATP and 5-phosphoribose 1-diphosphate to form N'-(5'-phosphoribosyl)-ATP (PR-ATP). Has a crucial role in the pathway because the rate of histidine biosynthesis seems to be controlled primarily by regulation of HisG enzymatic activity.</text>
</comment>
<comment type="catalytic activity">
    <reaction evidence="1">
        <text>1-(5-phospho-beta-D-ribosyl)-ATP + diphosphate = 5-phospho-alpha-D-ribose 1-diphosphate + ATP</text>
        <dbReference type="Rhea" id="RHEA:18473"/>
        <dbReference type="ChEBI" id="CHEBI:30616"/>
        <dbReference type="ChEBI" id="CHEBI:33019"/>
        <dbReference type="ChEBI" id="CHEBI:58017"/>
        <dbReference type="ChEBI" id="CHEBI:73183"/>
        <dbReference type="EC" id="2.4.2.17"/>
    </reaction>
</comment>
<comment type="pathway">
    <text evidence="1">Amino-acid biosynthesis; L-histidine biosynthesis; L-histidine from 5-phospho-alpha-D-ribose 1-diphosphate: step 1/9.</text>
</comment>
<comment type="subunit">
    <text evidence="1">Heteromultimer composed of HisG and HisZ subunits.</text>
</comment>
<comment type="subcellular location">
    <subcellularLocation>
        <location evidence="1">Cytoplasm</location>
    </subcellularLocation>
</comment>
<comment type="domain">
    <text>Lacks the C-terminal regulatory region which is replaced by HisZ.</text>
</comment>
<comment type="similarity">
    <text evidence="1">Belongs to the ATP phosphoribosyltransferase family. Short subfamily.</text>
</comment>
<protein>
    <recommendedName>
        <fullName evidence="1">ATP phosphoribosyltransferase</fullName>
        <shortName evidence="1">ATP-PRT</shortName>
        <shortName evidence="1">ATP-PRTase</shortName>
        <ecNumber evidence="1">2.4.2.17</ecNumber>
    </recommendedName>
</protein>
<keyword id="KW-0028">Amino-acid biosynthesis</keyword>
<keyword id="KW-0067">ATP-binding</keyword>
<keyword id="KW-0963">Cytoplasm</keyword>
<keyword id="KW-0328">Glycosyltransferase</keyword>
<keyword id="KW-0368">Histidine biosynthesis</keyword>
<keyword id="KW-0547">Nucleotide-binding</keyword>
<keyword id="KW-0808">Transferase</keyword>
<reference key="1">
    <citation type="journal article" date="2007" name="J. Bacteriol.">
        <title>The complete genome sequence of the lactic acid bacterial paradigm Lactococcus lactis subsp. cremoris MG1363.</title>
        <authorList>
            <person name="Wegmann U."/>
            <person name="O'Connell-Motherway M."/>
            <person name="Zomer A."/>
            <person name="Buist G."/>
            <person name="Shearman C."/>
            <person name="Canchaya C."/>
            <person name="Ventura M."/>
            <person name="Goesmann A."/>
            <person name="Gasson M.J."/>
            <person name="Kuipers O.P."/>
            <person name="van Sinderen D."/>
            <person name="Kok J."/>
        </authorList>
    </citation>
    <scope>NUCLEOTIDE SEQUENCE [LARGE SCALE GENOMIC DNA]</scope>
    <source>
        <strain>MG1363</strain>
    </source>
</reference>
<gene>
    <name evidence="1" type="primary">hisG</name>
    <name type="ordered locus">llmg_1296</name>
</gene>
<evidence type="ECO:0000255" key="1">
    <source>
        <dbReference type="HAMAP-Rule" id="MF_01018"/>
    </source>
</evidence>
<organism>
    <name type="scientific">Lactococcus lactis subsp. cremoris (strain MG1363)</name>
    <dbReference type="NCBI Taxonomy" id="416870"/>
    <lineage>
        <taxon>Bacteria</taxon>
        <taxon>Bacillati</taxon>
        <taxon>Bacillota</taxon>
        <taxon>Bacilli</taxon>
        <taxon>Lactobacillales</taxon>
        <taxon>Streptococcaceae</taxon>
        <taxon>Lactococcus</taxon>
        <taxon>Lactococcus cremoris subsp. cremoris</taxon>
    </lineage>
</organism>